<reference key="1">
    <citation type="journal article" date="2002" name="Nature">
        <title>The genome sequence of Schizosaccharomyces pombe.</title>
        <authorList>
            <person name="Wood V."/>
            <person name="Gwilliam R."/>
            <person name="Rajandream M.A."/>
            <person name="Lyne M.H."/>
            <person name="Lyne R."/>
            <person name="Stewart A."/>
            <person name="Sgouros J.G."/>
            <person name="Peat N."/>
            <person name="Hayles J."/>
            <person name="Baker S.G."/>
            <person name="Basham D."/>
            <person name="Bowman S."/>
            <person name="Brooks K."/>
            <person name="Brown D."/>
            <person name="Brown S."/>
            <person name="Chillingworth T."/>
            <person name="Churcher C.M."/>
            <person name="Collins M."/>
            <person name="Connor R."/>
            <person name="Cronin A."/>
            <person name="Davis P."/>
            <person name="Feltwell T."/>
            <person name="Fraser A."/>
            <person name="Gentles S."/>
            <person name="Goble A."/>
            <person name="Hamlin N."/>
            <person name="Harris D.E."/>
            <person name="Hidalgo J."/>
            <person name="Hodgson G."/>
            <person name="Holroyd S."/>
            <person name="Hornsby T."/>
            <person name="Howarth S."/>
            <person name="Huckle E.J."/>
            <person name="Hunt S."/>
            <person name="Jagels K."/>
            <person name="James K.D."/>
            <person name="Jones L."/>
            <person name="Jones M."/>
            <person name="Leather S."/>
            <person name="McDonald S."/>
            <person name="McLean J."/>
            <person name="Mooney P."/>
            <person name="Moule S."/>
            <person name="Mungall K.L."/>
            <person name="Murphy L.D."/>
            <person name="Niblett D."/>
            <person name="Odell C."/>
            <person name="Oliver K."/>
            <person name="O'Neil S."/>
            <person name="Pearson D."/>
            <person name="Quail M.A."/>
            <person name="Rabbinowitsch E."/>
            <person name="Rutherford K.M."/>
            <person name="Rutter S."/>
            <person name="Saunders D."/>
            <person name="Seeger K."/>
            <person name="Sharp S."/>
            <person name="Skelton J."/>
            <person name="Simmonds M.N."/>
            <person name="Squares R."/>
            <person name="Squares S."/>
            <person name="Stevens K."/>
            <person name="Taylor K."/>
            <person name="Taylor R.G."/>
            <person name="Tivey A."/>
            <person name="Walsh S.V."/>
            <person name="Warren T."/>
            <person name="Whitehead S."/>
            <person name="Woodward J.R."/>
            <person name="Volckaert G."/>
            <person name="Aert R."/>
            <person name="Robben J."/>
            <person name="Grymonprez B."/>
            <person name="Weltjens I."/>
            <person name="Vanstreels E."/>
            <person name="Rieger M."/>
            <person name="Schaefer M."/>
            <person name="Mueller-Auer S."/>
            <person name="Gabel C."/>
            <person name="Fuchs M."/>
            <person name="Duesterhoeft A."/>
            <person name="Fritzc C."/>
            <person name="Holzer E."/>
            <person name="Moestl D."/>
            <person name="Hilbert H."/>
            <person name="Borzym K."/>
            <person name="Langer I."/>
            <person name="Beck A."/>
            <person name="Lehrach H."/>
            <person name="Reinhardt R."/>
            <person name="Pohl T.M."/>
            <person name="Eger P."/>
            <person name="Zimmermann W."/>
            <person name="Wedler H."/>
            <person name="Wambutt R."/>
            <person name="Purnelle B."/>
            <person name="Goffeau A."/>
            <person name="Cadieu E."/>
            <person name="Dreano S."/>
            <person name="Gloux S."/>
            <person name="Lelaure V."/>
            <person name="Mottier S."/>
            <person name="Galibert F."/>
            <person name="Aves S.J."/>
            <person name="Xiang Z."/>
            <person name="Hunt C."/>
            <person name="Moore K."/>
            <person name="Hurst S.M."/>
            <person name="Lucas M."/>
            <person name="Rochet M."/>
            <person name="Gaillardin C."/>
            <person name="Tallada V.A."/>
            <person name="Garzon A."/>
            <person name="Thode G."/>
            <person name="Daga R.R."/>
            <person name="Cruzado L."/>
            <person name="Jimenez J."/>
            <person name="Sanchez M."/>
            <person name="del Rey F."/>
            <person name="Benito J."/>
            <person name="Dominguez A."/>
            <person name="Revuelta J.L."/>
            <person name="Moreno S."/>
            <person name="Armstrong J."/>
            <person name="Forsburg S.L."/>
            <person name="Cerutti L."/>
            <person name="Lowe T."/>
            <person name="McCombie W.R."/>
            <person name="Paulsen I."/>
            <person name="Potashkin J."/>
            <person name="Shpakovski G.V."/>
            <person name="Ussery D."/>
            <person name="Barrell B.G."/>
            <person name="Nurse P."/>
        </authorList>
    </citation>
    <scope>NUCLEOTIDE SEQUENCE [LARGE SCALE GENOMIC DNA]</scope>
    <source>
        <strain>972 / ATCC 24843</strain>
    </source>
</reference>
<protein>
    <recommendedName>
        <fullName evidence="1">Glutamyl-tRNA(Gln) amidotransferase subunit A, mitochondrial</fullName>
        <shortName evidence="1">Glu-AdT subunit A</shortName>
        <ecNumber evidence="1">6.3.5.7</ecNumber>
    </recommendedName>
</protein>
<feature type="chain" id="PRO_0000001204" description="Glutamyl-tRNA(Gln) amidotransferase subunit A, mitochondrial">
    <location>
        <begin position="1"/>
        <end position="471"/>
    </location>
</feature>
<feature type="active site" description="Charge relay system" evidence="1">
    <location>
        <position position="64"/>
    </location>
</feature>
<feature type="active site" description="Charge relay system" evidence="1">
    <location>
        <position position="141"/>
    </location>
</feature>
<feature type="active site" description="Acyl-ester intermediate" evidence="1">
    <location>
        <position position="165"/>
    </location>
</feature>
<organism>
    <name type="scientific">Schizosaccharomyces pombe (strain 972 / ATCC 24843)</name>
    <name type="common">Fission yeast</name>
    <dbReference type="NCBI Taxonomy" id="284812"/>
    <lineage>
        <taxon>Eukaryota</taxon>
        <taxon>Fungi</taxon>
        <taxon>Dikarya</taxon>
        <taxon>Ascomycota</taxon>
        <taxon>Taphrinomycotina</taxon>
        <taxon>Schizosaccharomycetes</taxon>
        <taxon>Schizosaccharomycetales</taxon>
        <taxon>Schizosaccharomycetaceae</taxon>
        <taxon>Schizosaccharomyces</taxon>
    </lineage>
</organism>
<sequence>MSNKYNNLLKEVAAKYASIILNDAKIKSLTSINSAEYLYDSFVEISKLPLEKKLPLKWKLITVKENICTKTNLTTAASNMLKDYNSPFDASIVESLKKAGGIILGKTNMDEFAMGVKSENNLFGRTVNPVVKDSNYDVGGSSGGAAAAIAADICYASVGSDTGGSIRLPAAYVGCVGFKPSFGRISRYGMLAFANSFDTVGIAANNVKGVTKVFNVLDHPDINDSTCLTKEARYFVKEQHKKLSRKPIKIGIPIDWNVSETHPNVLDKWNEFISLLKSNGYLVQEIQLPISLYANSVYSTMAYAEATSNLAKYNTIAFGNCLDEKFEEEIISSTARSFFLGDEVKKRLLLGAYSLARMNSSDLFSKARYVRRAIQLEFNKNFFLPSFSVDDPRGDIDFIVTPSFFNSSQPIETPSSYSHLSDTMLVPANMAGIPSVSIPFGTLNNGLPMGIQIMAQYLNDEDLLSFAGQFA</sequence>
<gene>
    <name type="ORF">SPBC646.03</name>
</gene>
<accession>O94509</accession>
<evidence type="ECO:0000255" key="1">
    <source>
        <dbReference type="HAMAP-Rule" id="MF_03150"/>
    </source>
</evidence>
<dbReference type="EC" id="6.3.5.7" evidence="1"/>
<dbReference type="EMBL" id="CU329671">
    <property type="protein sequence ID" value="CAA22807.1"/>
    <property type="molecule type" value="Genomic_DNA"/>
</dbReference>
<dbReference type="PIR" id="T40579">
    <property type="entry name" value="T40579"/>
</dbReference>
<dbReference type="SMR" id="O94509"/>
<dbReference type="FunCoup" id="O94509">
    <property type="interactions" value="202"/>
</dbReference>
<dbReference type="STRING" id="284812.O94509"/>
<dbReference type="PaxDb" id="4896-SPBC646.03.1"/>
<dbReference type="EnsemblFungi" id="SPBC646.03.1">
    <property type="protein sequence ID" value="SPBC646.03.1:pep"/>
    <property type="gene ID" value="SPBC646.03"/>
</dbReference>
<dbReference type="KEGG" id="spo:2541102"/>
<dbReference type="PomBase" id="SPBC646.03"/>
<dbReference type="VEuPathDB" id="FungiDB:SPBC646.03"/>
<dbReference type="eggNOG" id="KOG1211">
    <property type="taxonomic scope" value="Eukaryota"/>
</dbReference>
<dbReference type="HOGENOM" id="CLU_009600_7_6_1"/>
<dbReference type="InParanoid" id="O94509"/>
<dbReference type="OMA" id="DSKDATC"/>
<dbReference type="PhylomeDB" id="O94509"/>
<dbReference type="PRO" id="PR:O94509"/>
<dbReference type="Proteomes" id="UP000002485">
    <property type="component" value="Chromosome II"/>
</dbReference>
<dbReference type="GO" id="GO:0005737">
    <property type="term" value="C:cytoplasm"/>
    <property type="evidence" value="ECO:0007005"/>
    <property type="project" value="PomBase"/>
</dbReference>
<dbReference type="GO" id="GO:0030956">
    <property type="term" value="C:glutamyl-tRNA(Gln) amidotransferase complex"/>
    <property type="evidence" value="ECO:0000318"/>
    <property type="project" value="GO_Central"/>
</dbReference>
<dbReference type="GO" id="GO:0005759">
    <property type="term" value="C:mitochondrial matrix"/>
    <property type="evidence" value="ECO:0000305"/>
    <property type="project" value="PomBase"/>
</dbReference>
<dbReference type="GO" id="GO:0005739">
    <property type="term" value="C:mitochondrion"/>
    <property type="evidence" value="ECO:0000318"/>
    <property type="project" value="GO_Central"/>
</dbReference>
<dbReference type="GO" id="GO:0005524">
    <property type="term" value="F:ATP binding"/>
    <property type="evidence" value="ECO:0007669"/>
    <property type="project" value="UniProtKB-KW"/>
</dbReference>
<dbReference type="GO" id="GO:0050567">
    <property type="term" value="F:glutaminyl-tRNA synthase (glutamine-hydrolyzing) activity"/>
    <property type="evidence" value="ECO:0000318"/>
    <property type="project" value="GO_Central"/>
</dbReference>
<dbReference type="GO" id="GO:0070681">
    <property type="term" value="P:glutaminyl-tRNAGln biosynthesis via transamidation"/>
    <property type="evidence" value="ECO:0000318"/>
    <property type="project" value="GO_Central"/>
</dbReference>
<dbReference type="GO" id="GO:0032543">
    <property type="term" value="P:mitochondrial translation"/>
    <property type="evidence" value="ECO:0000318"/>
    <property type="project" value="GO_Central"/>
</dbReference>
<dbReference type="Gene3D" id="3.90.1300.10">
    <property type="entry name" value="Amidase signature (AS) domain"/>
    <property type="match status" value="1"/>
</dbReference>
<dbReference type="HAMAP" id="MF_00120">
    <property type="entry name" value="GatA"/>
    <property type="match status" value="1"/>
</dbReference>
<dbReference type="InterPro" id="IPR000120">
    <property type="entry name" value="Amidase"/>
</dbReference>
<dbReference type="InterPro" id="IPR020556">
    <property type="entry name" value="Amidase_CS"/>
</dbReference>
<dbReference type="InterPro" id="IPR023631">
    <property type="entry name" value="Amidase_dom"/>
</dbReference>
<dbReference type="InterPro" id="IPR036928">
    <property type="entry name" value="AS_sf"/>
</dbReference>
<dbReference type="InterPro" id="IPR004412">
    <property type="entry name" value="GatA"/>
</dbReference>
<dbReference type="PANTHER" id="PTHR11895:SF7">
    <property type="entry name" value="GLUTAMYL-TRNA(GLN) AMIDOTRANSFERASE SUBUNIT A, MITOCHONDRIAL"/>
    <property type="match status" value="1"/>
</dbReference>
<dbReference type="PANTHER" id="PTHR11895">
    <property type="entry name" value="TRANSAMIDASE"/>
    <property type="match status" value="1"/>
</dbReference>
<dbReference type="Pfam" id="PF01425">
    <property type="entry name" value="Amidase"/>
    <property type="match status" value="1"/>
</dbReference>
<dbReference type="SUPFAM" id="SSF75304">
    <property type="entry name" value="Amidase signature (AS) enzymes"/>
    <property type="match status" value="1"/>
</dbReference>
<dbReference type="PROSITE" id="PS00571">
    <property type="entry name" value="AMIDASES"/>
    <property type="match status" value="1"/>
</dbReference>
<name>GATA_SCHPO</name>
<comment type="function">
    <text evidence="1">Allows the formation of correctly charged Gln-tRNA(Gln) through the transamidation of misacylated Glu-tRNA(Gln) in the mitochondria. The reaction takes place in the presence of glutamine and ATP through an activated gamma-phospho-Glu-tRNA(Gln).</text>
</comment>
<comment type="catalytic activity">
    <reaction evidence="1">
        <text>L-glutamyl-tRNA(Gln) + L-glutamine + ATP + H2O = L-glutaminyl-tRNA(Gln) + L-glutamate + ADP + phosphate + H(+)</text>
        <dbReference type="Rhea" id="RHEA:17521"/>
        <dbReference type="Rhea" id="RHEA-COMP:9681"/>
        <dbReference type="Rhea" id="RHEA-COMP:9684"/>
        <dbReference type="ChEBI" id="CHEBI:15377"/>
        <dbReference type="ChEBI" id="CHEBI:15378"/>
        <dbReference type="ChEBI" id="CHEBI:29985"/>
        <dbReference type="ChEBI" id="CHEBI:30616"/>
        <dbReference type="ChEBI" id="CHEBI:43474"/>
        <dbReference type="ChEBI" id="CHEBI:58359"/>
        <dbReference type="ChEBI" id="CHEBI:78520"/>
        <dbReference type="ChEBI" id="CHEBI:78521"/>
        <dbReference type="ChEBI" id="CHEBI:456216"/>
        <dbReference type="EC" id="6.3.5.7"/>
    </reaction>
</comment>
<comment type="subunit">
    <text evidence="1">Subunit of the heterotrimeric GatCAB amidotransferase (AdT) complex, composed of A, B and C subunits.</text>
</comment>
<comment type="subcellular location">
    <subcellularLocation>
        <location>Mitochondrion</location>
    </subcellularLocation>
</comment>
<comment type="similarity">
    <text evidence="1">Belongs to the amidase family. GatA subfamily.</text>
</comment>
<keyword id="KW-0067">ATP-binding</keyword>
<keyword id="KW-0436">Ligase</keyword>
<keyword id="KW-0496">Mitochondrion</keyword>
<keyword id="KW-0547">Nucleotide-binding</keyword>
<keyword id="KW-0648">Protein biosynthesis</keyword>
<keyword id="KW-1185">Reference proteome</keyword>
<proteinExistence type="inferred from homology"/>